<name>IRLA_DICDI</name>
<protein>
    <recommendedName>
        <fullName>Probable serine/threonine-protein kinase irlA</fullName>
        <ecNumber>2.7.11.1</ecNumber>
    </recommendedName>
    <alternativeName>
        <fullName>Inositol-requiring protein-like protein kinase A</fullName>
    </alternativeName>
</protein>
<feature type="chain" id="PRO_0000362016" description="Probable serine/threonine-protein kinase irlA">
    <location>
        <begin position="1"/>
        <end position="1431"/>
    </location>
</feature>
<feature type="domain" description="Protein kinase" evidence="2">
    <location>
        <begin position="987"/>
        <end position="1261"/>
    </location>
</feature>
<feature type="domain" description="KEN" evidence="3">
    <location>
        <begin position="1264"/>
        <end position="1431"/>
    </location>
</feature>
<feature type="region of interest" description="Disordered" evidence="4">
    <location>
        <begin position="1"/>
        <end position="81"/>
    </location>
</feature>
<feature type="region of interest" description="Disordered" evidence="4">
    <location>
        <begin position="736"/>
        <end position="879"/>
    </location>
</feature>
<feature type="coiled-coil region" evidence="1">
    <location>
        <begin position="57"/>
        <end position="97"/>
    </location>
</feature>
<feature type="coiled-coil region" evidence="1">
    <location>
        <begin position="715"/>
        <end position="759"/>
    </location>
</feature>
<feature type="coiled-coil region" evidence="1">
    <location>
        <begin position="860"/>
        <end position="971"/>
    </location>
</feature>
<feature type="compositionally biased region" description="Basic residues" evidence="4">
    <location>
        <begin position="1"/>
        <end position="10"/>
    </location>
</feature>
<feature type="compositionally biased region" description="Acidic residues" evidence="4">
    <location>
        <begin position="25"/>
        <end position="43"/>
    </location>
</feature>
<feature type="compositionally biased region" description="Low complexity" evidence="4">
    <location>
        <begin position="46"/>
        <end position="67"/>
    </location>
</feature>
<feature type="compositionally biased region" description="Basic and acidic residues" evidence="4">
    <location>
        <begin position="68"/>
        <end position="81"/>
    </location>
</feature>
<feature type="compositionally biased region" description="Basic residues" evidence="4">
    <location>
        <begin position="738"/>
        <end position="749"/>
    </location>
</feature>
<feature type="compositionally biased region" description="Low complexity" evidence="4">
    <location>
        <begin position="750"/>
        <end position="776"/>
    </location>
</feature>
<feature type="compositionally biased region" description="Polar residues" evidence="4">
    <location>
        <begin position="777"/>
        <end position="791"/>
    </location>
</feature>
<feature type="compositionally biased region" description="Low complexity" evidence="4">
    <location>
        <begin position="792"/>
        <end position="812"/>
    </location>
</feature>
<feature type="compositionally biased region" description="Polar residues" evidence="4">
    <location>
        <begin position="821"/>
        <end position="838"/>
    </location>
</feature>
<feature type="compositionally biased region" description="Low complexity" evidence="4">
    <location>
        <begin position="854"/>
        <end position="878"/>
    </location>
</feature>
<feature type="active site" description="Proton acceptor" evidence="2">
    <location>
        <position position="1130"/>
    </location>
</feature>
<feature type="binding site" evidence="2">
    <location>
        <begin position="993"/>
        <end position="1001"/>
    </location>
    <ligand>
        <name>ATP</name>
        <dbReference type="ChEBI" id="CHEBI:30616"/>
    </ligand>
</feature>
<feature type="binding site" evidence="2">
    <location>
        <position position="1016"/>
    </location>
    <ligand>
        <name>ATP</name>
        <dbReference type="ChEBI" id="CHEBI:30616"/>
    </ligand>
</feature>
<sequence length="1431" mass="166070">MTKPIFKSKTKPLGWSKISSKEVINEDEEEEEGGEEGGEEEEIDNNKNSNNSSSNSNNNNNDNNNNNGEERKVEKEEEKEEINHYRNQFEKDLLDMELKALNRETIDNILSGLNSYEIFKEVNFDFEKLYSIIISEPPPLFDTFFDSVSSFEIFFTDCLILLCSNFPDGIDTSITRPNFNDFYNHFKDRGVINKYISRENIHKALNDKLMTDYFNSGIYLGLLDTLDIAAIRFITIFGKFLSYEVVETISNSLFRYRTDKIEFLSDIIRELLLCNEKYRTLSKSYDLVQKRLQKEEFTFIKVFEDDDPKLFSALYQPPDIIKLITEPEKDSGFWCMIGIFKSKRILDYLIRTEPSKSWFKGKESDYFFSIAEMGGKYFNWTLLEPKLIKKEVNQKSLKGVIPPRELNSQQRNTQFFRVFNGVTGFNDIRFVYANPSLAQHAIKFIQKVTECGLFLNTDVRNVRDSIPNSNSFLFRKFLEVNFFYRYEKDNEVYQHQPTEENSLLYSTSIISRIVEMEVTDLLSVVLKNLTQQGCSLAREAVDERSLLSTIHSDKYYNSSIVVLHNYWPIPPKFCDCSTSFISMANGKLPRTYSGSDGVIPYIFFARNHLTLGFLLSIHNNITDTIDINHWISVAISGGLYYDKEEIFRKYPLLQKESTLQKYPRPVNILEFQTLLENNECIEYIARTFIKEIPPHEVPTVKHSDLLILFEISVMKKRSIRSKESLQAELDLIEEEKREKKKQKDKKKNKSNQNQKNNNNQNNQSNNNKINSPSSNKLTQNVTPPSSPVNIITSSSTTSSSTSSTTSSTTSSTIEPKPPTQTLPIKTSSPTKPESQKPSTPDPLIPKSSKSTTKNNNNNNNNNNNNNNNNNNNNNNNNNKENREMALEVINEMEKIEIEESLLSTSSLVQPQQQSQQSQQQQEQQQQQQQQQQQQQQQQQQQQQQQQQQQQQQEKQQEQQEQQESIQLNQTLTPIIPDFQIGKFKFSRDENNIIGRGSNGTLVFRGIWNDRIPVAVKQMQKAFNPHISKEIEVLIRLTSNNCSNMIRYIDQEEDQLFVYLGLTLCEESLQDLMESKRYKEFIEKTTTTNITTTFNNNIIDENLYEQRILSLFKDVINGINFLHCQDIVHNDLNPRNILVHKGNFVISDLGLSKMQVETSYSFTNNAPTGQEGYHPIEVLQEKRKTKSVDIFSLGCILFYLLTNGQHPFGNNKLLRVANIVYDKPDLEPLKFNAPALDLVRLMISQDEKKRPTIDTILNHPLFWSTNEKIKFYESSLNLLKDPNNSQSKHSKLLNYYQNDNSGGVLFLSKPWNQIIDPFLIDHVENNNNNNNNNNNNKQNSKKLAIVAYQYDQVRDLVRCIRNSLVHHKDILRSITQQQNLPPSSKEFANDCLKSQESVLLYFECKFPDLLFHLYQQFKKSDFNSKDYLNIKF</sequence>
<gene>
    <name type="primary">irlA</name>
    <name type="ORF">DDB_G0272987</name>
</gene>
<reference key="1">
    <citation type="journal article" date="2002" name="Nature">
        <title>Sequence and analysis of chromosome 2 of Dictyostelium discoideum.</title>
        <authorList>
            <person name="Gloeckner G."/>
            <person name="Eichinger L."/>
            <person name="Szafranski K."/>
            <person name="Pachebat J.A."/>
            <person name="Bankier A.T."/>
            <person name="Dear P.H."/>
            <person name="Lehmann R."/>
            <person name="Baumgart C."/>
            <person name="Parra G."/>
            <person name="Abril J.F."/>
            <person name="Guigo R."/>
            <person name="Kumpf K."/>
            <person name="Tunggal B."/>
            <person name="Cox E.C."/>
            <person name="Quail M.A."/>
            <person name="Platzer M."/>
            <person name="Rosenthal A."/>
            <person name="Noegel A.A."/>
        </authorList>
    </citation>
    <scope>NUCLEOTIDE SEQUENCE [LARGE SCALE GENOMIC DNA]</scope>
    <source>
        <strain>AX4</strain>
    </source>
</reference>
<reference key="2">
    <citation type="journal article" date="2005" name="Nature">
        <title>The genome of the social amoeba Dictyostelium discoideum.</title>
        <authorList>
            <person name="Eichinger L."/>
            <person name="Pachebat J.A."/>
            <person name="Gloeckner G."/>
            <person name="Rajandream M.A."/>
            <person name="Sucgang R."/>
            <person name="Berriman M."/>
            <person name="Song J."/>
            <person name="Olsen R."/>
            <person name="Szafranski K."/>
            <person name="Xu Q."/>
            <person name="Tunggal B."/>
            <person name="Kummerfeld S."/>
            <person name="Madera M."/>
            <person name="Konfortov B.A."/>
            <person name="Rivero F."/>
            <person name="Bankier A.T."/>
            <person name="Lehmann R."/>
            <person name="Hamlin N."/>
            <person name="Davies R."/>
            <person name="Gaudet P."/>
            <person name="Fey P."/>
            <person name="Pilcher K."/>
            <person name="Chen G."/>
            <person name="Saunders D."/>
            <person name="Sodergren E.J."/>
            <person name="Davis P."/>
            <person name="Kerhornou A."/>
            <person name="Nie X."/>
            <person name="Hall N."/>
            <person name="Anjard C."/>
            <person name="Hemphill L."/>
            <person name="Bason N."/>
            <person name="Farbrother P."/>
            <person name="Desany B."/>
            <person name="Just E."/>
            <person name="Morio T."/>
            <person name="Rost R."/>
            <person name="Churcher C.M."/>
            <person name="Cooper J."/>
            <person name="Haydock S."/>
            <person name="van Driessche N."/>
            <person name="Cronin A."/>
            <person name="Goodhead I."/>
            <person name="Muzny D.M."/>
            <person name="Mourier T."/>
            <person name="Pain A."/>
            <person name="Lu M."/>
            <person name="Harper D."/>
            <person name="Lindsay R."/>
            <person name="Hauser H."/>
            <person name="James K.D."/>
            <person name="Quiles M."/>
            <person name="Madan Babu M."/>
            <person name="Saito T."/>
            <person name="Buchrieser C."/>
            <person name="Wardroper A."/>
            <person name="Felder M."/>
            <person name="Thangavelu M."/>
            <person name="Johnson D."/>
            <person name="Knights A."/>
            <person name="Loulseged H."/>
            <person name="Mungall K.L."/>
            <person name="Oliver K."/>
            <person name="Price C."/>
            <person name="Quail M.A."/>
            <person name="Urushihara H."/>
            <person name="Hernandez J."/>
            <person name="Rabbinowitsch E."/>
            <person name="Steffen D."/>
            <person name="Sanders M."/>
            <person name="Ma J."/>
            <person name="Kohara Y."/>
            <person name="Sharp S."/>
            <person name="Simmonds M.N."/>
            <person name="Spiegler S."/>
            <person name="Tivey A."/>
            <person name="Sugano S."/>
            <person name="White B."/>
            <person name="Walker D."/>
            <person name="Woodward J.R."/>
            <person name="Winckler T."/>
            <person name="Tanaka Y."/>
            <person name="Shaulsky G."/>
            <person name="Schleicher M."/>
            <person name="Weinstock G.M."/>
            <person name="Rosenthal A."/>
            <person name="Cox E.C."/>
            <person name="Chisholm R.L."/>
            <person name="Gibbs R.A."/>
            <person name="Loomis W.F."/>
            <person name="Platzer M."/>
            <person name="Kay R.R."/>
            <person name="Williams J.G."/>
            <person name="Dear P.H."/>
            <person name="Noegel A.A."/>
            <person name="Barrell B.G."/>
            <person name="Kuspa A."/>
        </authorList>
    </citation>
    <scope>NUCLEOTIDE SEQUENCE [LARGE SCALE GENOMIC DNA]</scope>
    <source>
        <strain>AX4</strain>
    </source>
</reference>
<keyword id="KW-0067">ATP-binding</keyword>
<keyword id="KW-0175">Coiled coil</keyword>
<keyword id="KW-0418">Kinase</keyword>
<keyword id="KW-0547">Nucleotide-binding</keyword>
<keyword id="KW-1185">Reference proteome</keyword>
<keyword id="KW-0723">Serine/threonine-protein kinase</keyword>
<keyword id="KW-0808">Transferase</keyword>
<evidence type="ECO:0000255" key="1"/>
<evidence type="ECO:0000255" key="2">
    <source>
        <dbReference type="PROSITE-ProRule" id="PRU00159"/>
    </source>
</evidence>
<evidence type="ECO:0000255" key="3">
    <source>
        <dbReference type="PROSITE-ProRule" id="PRU00725"/>
    </source>
</evidence>
<evidence type="ECO:0000256" key="4">
    <source>
        <dbReference type="SAM" id="MobiDB-lite"/>
    </source>
</evidence>
<dbReference type="EC" id="2.7.11.1"/>
<dbReference type="EMBL" id="AAFI02000008">
    <property type="protein sequence ID" value="EAL71131.1"/>
    <property type="molecule type" value="Genomic_DNA"/>
</dbReference>
<dbReference type="RefSeq" id="XP_644914.1">
    <property type="nucleotide sequence ID" value="XM_639822.1"/>
</dbReference>
<dbReference type="SMR" id="Q559A2"/>
<dbReference type="STRING" id="44689.Q559A2"/>
<dbReference type="GlyGen" id="Q559A2">
    <property type="glycosylation" value="1 site"/>
</dbReference>
<dbReference type="PaxDb" id="44689-DDB0231216"/>
<dbReference type="EnsemblProtists" id="EAL71131">
    <property type="protein sequence ID" value="EAL71131"/>
    <property type="gene ID" value="DDB_G0272987"/>
</dbReference>
<dbReference type="GeneID" id="8618593"/>
<dbReference type="KEGG" id="ddi:DDB_G0272987"/>
<dbReference type="dictyBase" id="DDB_G0272987">
    <property type="gene designation" value="irlA"/>
</dbReference>
<dbReference type="VEuPathDB" id="AmoebaDB:DDB_G0272987"/>
<dbReference type="eggNOG" id="KOG1027">
    <property type="taxonomic scope" value="Eukaryota"/>
</dbReference>
<dbReference type="HOGENOM" id="CLU_248487_0_0_1"/>
<dbReference type="InParanoid" id="Q559A2"/>
<dbReference type="PRO" id="PR:Q559A2"/>
<dbReference type="Proteomes" id="UP000002195">
    <property type="component" value="Chromosome 2"/>
</dbReference>
<dbReference type="GO" id="GO:1990604">
    <property type="term" value="C:IRE1-TRAF2-ASK1 complex"/>
    <property type="evidence" value="ECO:0000318"/>
    <property type="project" value="GO_Central"/>
</dbReference>
<dbReference type="GO" id="GO:0005524">
    <property type="term" value="F:ATP binding"/>
    <property type="evidence" value="ECO:0007669"/>
    <property type="project" value="UniProtKB-KW"/>
</dbReference>
<dbReference type="GO" id="GO:0106310">
    <property type="term" value="F:protein serine kinase activity"/>
    <property type="evidence" value="ECO:0007669"/>
    <property type="project" value="RHEA"/>
</dbReference>
<dbReference type="GO" id="GO:0004674">
    <property type="term" value="F:protein serine/threonine kinase activity"/>
    <property type="evidence" value="ECO:0000318"/>
    <property type="project" value="GO_Central"/>
</dbReference>
<dbReference type="GO" id="GO:0004521">
    <property type="term" value="F:RNA endonuclease activity"/>
    <property type="evidence" value="ECO:0000318"/>
    <property type="project" value="GO_Central"/>
</dbReference>
<dbReference type="GO" id="GO:0051082">
    <property type="term" value="F:unfolded protein binding"/>
    <property type="evidence" value="ECO:0000318"/>
    <property type="project" value="GO_Central"/>
</dbReference>
<dbReference type="GO" id="GO:0036498">
    <property type="term" value="P:IRE1-mediated unfolded protein response"/>
    <property type="evidence" value="ECO:0000318"/>
    <property type="project" value="GO_Central"/>
</dbReference>
<dbReference type="GO" id="GO:0006397">
    <property type="term" value="P:mRNA processing"/>
    <property type="evidence" value="ECO:0007669"/>
    <property type="project" value="InterPro"/>
</dbReference>
<dbReference type="CDD" id="cd10321">
    <property type="entry name" value="RNase_Ire1_like"/>
    <property type="match status" value="1"/>
</dbReference>
<dbReference type="FunFam" id="1.10.510.10:FF:001066">
    <property type="entry name" value="Probable serine/threonine-protein kinase irlE"/>
    <property type="match status" value="1"/>
</dbReference>
<dbReference type="FunFam" id="3.30.200.20:FF:000077">
    <property type="entry name" value="Putative Serine/threonine-protein kinase/endoribonuclease IRE1"/>
    <property type="match status" value="1"/>
</dbReference>
<dbReference type="Gene3D" id="1.20.1440.180">
    <property type="entry name" value="KEN domain"/>
    <property type="match status" value="1"/>
</dbReference>
<dbReference type="Gene3D" id="3.30.200.20">
    <property type="entry name" value="Phosphorylase Kinase, domain 1"/>
    <property type="match status" value="1"/>
</dbReference>
<dbReference type="Gene3D" id="1.10.510.10">
    <property type="entry name" value="Transferase(Phosphotransferase) domain 1"/>
    <property type="match status" value="1"/>
</dbReference>
<dbReference type="InterPro" id="IPR045133">
    <property type="entry name" value="IRE1/2-like"/>
</dbReference>
<dbReference type="InterPro" id="IPR010513">
    <property type="entry name" value="KEN_dom"/>
</dbReference>
<dbReference type="InterPro" id="IPR038357">
    <property type="entry name" value="KEN_sf"/>
</dbReference>
<dbReference type="InterPro" id="IPR011009">
    <property type="entry name" value="Kinase-like_dom_sf"/>
</dbReference>
<dbReference type="InterPro" id="IPR000719">
    <property type="entry name" value="Prot_kinase_dom"/>
</dbReference>
<dbReference type="PANTHER" id="PTHR13954">
    <property type="entry name" value="IRE1-RELATED"/>
    <property type="match status" value="1"/>
</dbReference>
<dbReference type="PANTHER" id="PTHR13954:SF12">
    <property type="entry name" value="SERINE_THREONINE-PROTEIN KINASE IRLA-RELATED"/>
    <property type="match status" value="1"/>
</dbReference>
<dbReference type="Pfam" id="PF00069">
    <property type="entry name" value="Pkinase"/>
    <property type="match status" value="1"/>
</dbReference>
<dbReference type="Pfam" id="PF06479">
    <property type="entry name" value="Ribonuc_2-5A"/>
    <property type="match status" value="1"/>
</dbReference>
<dbReference type="SUPFAM" id="SSF81995">
    <property type="entry name" value="beta-sandwich domain of Sec23/24"/>
    <property type="match status" value="1"/>
</dbReference>
<dbReference type="SUPFAM" id="SSF56112">
    <property type="entry name" value="Protein kinase-like (PK-like)"/>
    <property type="match status" value="1"/>
</dbReference>
<dbReference type="PROSITE" id="PS51392">
    <property type="entry name" value="KEN"/>
    <property type="match status" value="1"/>
</dbReference>
<dbReference type="PROSITE" id="PS50011">
    <property type="entry name" value="PROTEIN_KINASE_DOM"/>
    <property type="match status" value="1"/>
</dbReference>
<comment type="catalytic activity">
    <reaction>
        <text>L-seryl-[protein] + ATP = O-phospho-L-seryl-[protein] + ADP + H(+)</text>
        <dbReference type="Rhea" id="RHEA:17989"/>
        <dbReference type="Rhea" id="RHEA-COMP:9863"/>
        <dbReference type="Rhea" id="RHEA-COMP:11604"/>
        <dbReference type="ChEBI" id="CHEBI:15378"/>
        <dbReference type="ChEBI" id="CHEBI:29999"/>
        <dbReference type="ChEBI" id="CHEBI:30616"/>
        <dbReference type="ChEBI" id="CHEBI:83421"/>
        <dbReference type="ChEBI" id="CHEBI:456216"/>
        <dbReference type="EC" id="2.7.11.1"/>
    </reaction>
</comment>
<comment type="catalytic activity">
    <reaction>
        <text>L-threonyl-[protein] + ATP = O-phospho-L-threonyl-[protein] + ADP + H(+)</text>
        <dbReference type="Rhea" id="RHEA:46608"/>
        <dbReference type="Rhea" id="RHEA-COMP:11060"/>
        <dbReference type="Rhea" id="RHEA-COMP:11605"/>
        <dbReference type="ChEBI" id="CHEBI:15378"/>
        <dbReference type="ChEBI" id="CHEBI:30013"/>
        <dbReference type="ChEBI" id="CHEBI:30616"/>
        <dbReference type="ChEBI" id="CHEBI:61977"/>
        <dbReference type="ChEBI" id="CHEBI:456216"/>
        <dbReference type="EC" id="2.7.11.1"/>
    </reaction>
</comment>
<comment type="similarity">
    <text evidence="2">Belongs to the protein kinase superfamily. Ser/Thr protein kinase family.</text>
</comment>
<organism>
    <name type="scientific">Dictyostelium discoideum</name>
    <name type="common">Social amoeba</name>
    <dbReference type="NCBI Taxonomy" id="44689"/>
    <lineage>
        <taxon>Eukaryota</taxon>
        <taxon>Amoebozoa</taxon>
        <taxon>Evosea</taxon>
        <taxon>Eumycetozoa</taxon>
        <taxon>Dictyostelia</taxon>
        <taxon>Dictyosteliales</taxon>
        <taxon>Dictyosteliaceae</taxon>
        <taxon>Dictyostelium</taxon>
    </lineage>
</organism>
<accession>Q559A2</accession>
<accession>Q86IF7</accession>
<proteinExistence type="inferred from homology"/>